<organism>
    <name type="scientific">Arabidopsis thaliana</name>
    <name type="common">Mouse-ear cress</name>
    <dbReference type="NCBI Taxonomy" id="3702"/>
    <lineage>
        <taxon>Eukaryota</taxon>
        <taxon>Viridiplantae</taxon>
        <taxon>Streptophyta</taxon>
        <taxon>Embryophyta</taxon>
        <taxon>Tracheophyta</taxon>
        <taxon>Spermatophyta</taxon>
        <taxon>Magnoliopsida</taxon>
        <taxon>eudicotyledons</taxon>
        <taxon>Gunneridae</taxon>
        <taxon>Pentapetalae</taxon>
        <taxon>rosids</taxon>
        <taxon>malvids</taxon>
        <taxon>Brassicales</taxon>
        <taxon>Brassicaceae</taxon>
        <taxon>Camelineae</taxon>
        <taxon>Arabidopsis</taxon>
    </lineage>
</organism>
<name>HFA1D_ARATH</name>
<protein>
    <recommendedName>
        <fullName>Heat stress transcription factor A-1d</fullName>
        <shortName>AtHsfA1d</shortName>
    </recommendedName>
    <alternativeName>
        <fullName>AtHsf-01</fullName>
    </alternativeName>
    <alternativeName>
        <fullName>Heat shock factor protein 8</fullName>
        <shortName>HSF 8</shortName>
    </alternativeName>
    <alternativeName>
        <fullName>Heat shock transcription factor 8</fullName>
        <shortName>HSTF 8</shortName>
    </alternativeName>
</protein>
<feature type="chain" id="PRO_0000270801" description="Heat stress transcription factor A-1d">
    <location>
        <begin position="1"/>
        <end position="485"/>
    </location>
</feature>
<feature type="DNA-binding region" evidence="1">
    <location>
        <begin position="35"/>
        <end position="129"/>
    </location>
</feature>
<feature type="region of interest" description="Disordered" evidence="3">
    <location>
        <begin position="1"/>
        <end position="34"/>
    </location>
</feature>
<feature type="region of interest" description="Disordered" evidence="3">
    <location>
        <begin position="126"/>
        <end position="149"/>
    </location>
</feature>
<feature type="region of interest" description="Hydrophobic repeat HR-A/B">
    <location>
        <begin position="152"/>
        <end position="218"/>
    </location>
</feature>
<feature type="region of interest" description="Disordered" evidence="3">
    <location>
        <begin position="229"/>
        <end position="269"/>
    </location>
</feature>
<feature type="region of interest" description="Disordered" evidence="3">
    <location>
        <begin position="436"/>
        <end position="461"/>
    </location>
</feature>
<feature type="short sequence motif" description="Bipartite nuclear localization signal" evidence="2">
    <location>
        <begin position="238"/>
        <end position="252"/>
    </location>
</feature>
<feature type="short sequence motif" description="Nuclear export signal" evidence="2">
    <location>
        <begin position="472"/>
        <end position="480"/>
    </location>
</feature>
<feature type="compositionally biased region" description="Low complexity" evidence="3">
    <location>
        <begin position="136"/>
        <end position="146"/>
    </location>
</feature>
<feature type="compositionally biased region" description="Polar residues" evidence="3">
    <location>
        <begin position="441"/>
        <end position="455"/>
    </location>
</feature>
<keyword id="KW-0963">Cytoplasm</keyword>
<keyword id="KW-0238">DNA-binding</keyword>
<keyword id="KW-0539">Nucleus</keyword>
<keyword id="KW-0597">Phosphoprotein</keyword>
<keyword id="KW-1185">Reference proteome</keyword>
<keyword id="KW-0346">Stress response</keyword>
<keyword id="KW-0804">Transcription</keyword>
<keyword id="KW-0805">Transcription regulation</keyword>
<evidence type="ECO:0000250" key="1"/>
<evidence type="ECO:0000255" key="2"/>
<evidence type="ECO:0000256" key="3">
    <source>
        <dbReference type="SAM" id="MobiDB-lite"/>
    </source>
</evidence>
<evidence type="ECO:0000269" key="4">
    <source>
    </source>
</evidence>
<evidence type="ECO:0000305" key="5"/>
<accession>Q9LQM7</accession>
<accession>Q8GXS5</accession>
<reference key="1">
    <citation type="journal article" date="2000" name="Nature">
        <title>Sequence and analysis of chromosome 1 of the plant Arabidopsis thaliana.</title>
        <authorList>
            <person name="Theologis A."/>
            <person name="Ecker J.R."/>
            <person name="Palm C.J."/>
            <person name="Federspiel N.A."/>
            <person name="Kaul S."/>
            <person name="White O."/>
            <person name="Alonso J."/>
            <person name="Altafi H."/>
            <person name="Araujo R."/>
            <person name="Bowman C.L."/>
            <person name="Brooks S.Y."/>
            <person name="Buehler E."/>
            <person name="Chan A."/>
            <person name="Chao Q."/>
            <person name="Chen H."/>
            <person name="Cheuk R.F."/>
            <person name="Chin C.W."/>
            <person name="Chung M.K."/>
            <person name="Conn L."/>
            <person name="Conway A.B."/>
            <person name="Conway A.R."/>
            <person name="Creasy T.H."/>
            <person name="Dewar K."/>
            <person name="Dunn P."/>
            <person name="Etgu P."/>
            <person name="Feldblyum T.V."/>
            <person name="Feng J.-D."/>
            <person name="Fong B."/>
            <person name="Fujii C.Y."/>
            <person name="Gill J.E."/>
            <person name="Goldsmith A.D."/>
            <person name="Haas B."/>
            <person name="Hansen N.F."/>
            <person name="Hughes B."/>
            <person name="Huizar L."/>
            <person name="Hunter J.L."/>
            <person name="Jenkins J."/>
            <person name="Johnson-Hopson C."/>
            <person name="Khan S."/>
            <person name="Khaykin E."/>
            <person name="Kim C.J."/>
            <person name="Koo H.L."/>
            <person name="Kremenetskaia I."/>
            <person name="Kurtz D.B."/>
            <person name="Kwan A."/>
            <person name="Lam B."/>
            <person name="Langin-Hooper S."/>
            <person name="Lee A."/>
            <person name="Lee J.M."/>
            <person name="Lenz C.A."/>
            <person name="Li J.H."/>
            <person name="Li Y.-P."/>
            <person name="Lin X."/>
            <person name="Liu S.X."/>
            <person name="Liu Z.A."/>
            <person name="Luros J.S."/>
            <person name="Maiti R."/>
            <person name="Marziali A."/>
            <person name="Militscher J."/>
            <person name="Miranda M."/>
            <person name="Nguyen M."/>
            <person name="Nierman W.C."/>
            <person name="Osborne B.I."/>
            <person name="Pai G."/>
            <person name="Peterson J."/>
            <person name="Pham P.K."/>
            <person name="Rizzo M."/>
            <person name="Rooney T."/>
            <person name="Rowley D."/>
            <person name="Sakano H."/>
            <person name="Salzberg S.L."/>
            <person name="Schwartz J.R."/>
            <person name="Shinn P."/>
            <person name="Southwick A.M."/>
            <person name="Sun H."/>
            <person name="Tallon L.J."/>
            <person name="Tambunga G."/>
            <person name="Toriumi M.J."/>
            <person name="Town C.D."/>
            <person name="Utterback T."/>
            <person name="Van Aken S."/>
            <person name="Vaysberg M."/>
            <person name="Vysotskaia V.S."/>
            <person name="Walker M."/>
            <person name="Wu D."/>
            <person name="Yu G."/>
            <person name="Fraser C.M."/>
            <person name="Venter J.C."/>
            <person name="Davis R.W."/>
        </authorList>
    </citation>
    <scope>NUCLEOTIDE SEQUENCE [LARGE SCALE GENOMIC DNA]</scope>
    <source>
        <strain>cv. Columbia</strain>
    </source>
</reference>
<reference key="2">
    <citation type="journal article" date="2017" name="Plant J.">
        <title>Araport11: a complete reannotation of the Arabidopsis thaliana reference genome.</title>
        <authorList>
            <person name="Cheng C.Y."/>
            <person name="Krishnakumar V."/>
            <person name="Chan A.P."/>
            <person name="Thibaud-Nissen F."/>
            <person name="Schobel S."/>
            <person name="Town C.D."/>
        </authorList>
    </citation>
    <scope>GENOME REANNOTATION</scope>
    <source>
        <strain>cv. Columbia</strain>
    </source>
</reference>
<reference key="3">
    <citation type="journal article" date="2002" name="Science">
        <title>Functional annotation of a full-length Arabidopsis cDNA collection.</title>
        <authorList>
            <person name="Seki M."/>
            <person name="Narusaka M."/>
            <person name="Kamiya A."/>
            <person name="Ishida J."/>
            <person name="Satou M."/>
            <person name="Sakurai T."/>
            <person name="Nakajima M."/>
            <person name="Enju A."/>
            <person name="Akiyama K."/>
            <person name="Oono Y."/>
            <person name="Muramatsu M."/>
            <person name="Hayashizaki Y."/>
            <person name="Kawai J."/>
            <person name="Carninci P."/>
            <person name="Itoh M."/>
            <person name="Ishii Y."/>
            <person name="Arakawa T."/>
            <person name="Shibata K."/>
            <person name="Shinagawa A."/>
            <person name="Shinozaki K."/>
        </authorList>
    </citation>
    <scope>NUCLEOTIDE SEQUENCE [LARGE SCALE MRNA] OF 347-485</scope>
    <source>
        <strain>cv. Columbia</strain>
    </source>
</reference>
<reference key="4">
    <citation type="journal article" date="2001" name="Cell Stress Chaperones">
        <title>Arabidopsis and the heat stress transcription factor world: how many heat stress transcription factors do we need?</title>
        <authorList>
            <person name="Nover L."/>
            <person name="Bharti K."/>
            <person name="Doering P."/>
            <person name="Mishra S.K."/>
            <person name="Ganguli A."/>
            <person name="Scharf K.-D."/>
        </authorList>
    </citation>
    <scope>GENE FAMILY</scope>
    <scope>NOMENCLATURE</scope>
</reference>
<reference key="5">
    <citation type="journal article" date="2007" name="J. Biol. Chem.">
        <title>Cytosolic HSP90 regulates the heat shock response that is responsible for heat acclimation in Arabidopsis thaliana.</title>
        <authorList>
            <person name="Yamada K."/>
            <person name="Fukao Y."/>
            <person name="Hayashi M."/>
            <person name="Fukazawa M."/>
            <person name="Suzuki I."/>
            <person name="Nishimura M."/>
        </authorList>
    </citation>
    <scope>INTERACTION WITH HSP90-2</scope>
</reference>
<reference key="6">
    <citation type="journal article" date="2008" name="J. Genet. Genomics">
        <title>Genome-wide analysis of heat shock transcription factor families in rice and Arabidopsis.</title>
        <authorList>
            <person name="Guo J."/>
            <person name="Wu J."/>
            <person name="Ji Q."/>
            <person name="Wang C."/>
            <person name="Luo L."/>
            <person name="Yuan Y."/>
            <person name="Wang Y."/>
            <person name="Wang J."/>
        </authorList>
    </citation>
    <scope>GENE FAMILY</scope>
    <scope>NOMENCLATURE</scope>
</reference>
<comment type="function">
    <text>Transcriptional regulator that specifically binds DNA sequence 5'-AGAAnnTTCT-3' known as heat shock promoter elements (HSE).</text>
</comment>
<comment type="subunit">
    <text evidence="1 4">Homotrimer (By similarity). Interacts with HSP90-2 (PubMed:17965410).</text>
</comment>
<comment type="subcellular location">
    <subcellularLocation>
        <location evidence="5">Cytoplasm</location>
    </subcellularLocation>
    <subcellularLocation>
        <location evidence="5">Nucleus</location>
    </subcellularLocation>
</comment>
<comment type="domain">
    <text>The hydrophobic-rich region (HR-A/B) corresponds to the oligomerization domain.</text>
</comment>
<comment type="PTM">
    <text evidence="1">Exhibits temperature-dependent phosphorylation.</text>
</comment>
<comment type="similarity">
    <text evidence="5">Belongs to the HSF family. Class A subfamily.</text>
</comment>
<comment type="sequence caution" evidence="5">
    <conflict type="erroneous gene model prediction">
        <sequence resource="EMBL-CDS" id="AAF81328"/>
    </conflict>
</comment>
<comment type="sequence caution" evidence="5">
    <conflict type="erroneous gene model prediction">
        <sequence resource="EMBL-CDS" id="AAG60176"/>
    </conflict>
</comment>
<sequence length="485" mass="54524">MDVSKVTTSDGGGDSMETKPSPQPQPAAILSSNAPPPFLSKTYDMVDDHNTDSIVSWSANNNSFIVWKPPEFARDLLPKNFKHNNFSSFVRQLNTYGFRKVDPDRWEFANEGFLRGQKHLLQSITRRKPAHGQGQGHQRSQHSNGQNSSVSACVEVGKFGLEEEVERLKRDKNVLMQELVRLRQQQQSTDNQLQTMVQRLQGMENRQQQLMSFLAKAVQSPHFLSQFLQQQNQQNESNRRISDTSKKRRFKRDGIVRNNDSATPDGQIVKYQPPMHEQAKAMFKQLMKMEPYKTGDDGFLLGNGTSTTEGTEMETSSNQVSGITLKEMPTASEIQSSSPIETTPENVSAASEATENCIPSPDDLTLPDFTHMLPENNSEKPPESFMEPNLGGSSPLLDPDLLIDDSLSFDIDDFPMDSDIDPVDYGLLERLLMSSPVPDNMDSTPVDNETEQEQNGWDKTKHMDNLTQQMGLLSPETLDLSRQNP</sequence>
<gene>
    <name type="primary">HSFA1D</name>
    <name type="synonym">HSF01</name>
    <name type="synonym">HSF8</name>
    <name type="ordered locus">At1g32330</name>
    <name type="ORF">F27G20.6</name>
    <name type="ORF">F5D14.8</name>
</gene>
<dbReference type="EMBL" id="AC007767">
    <property type="protein sequence ID" value="AAF81328.1"/>
    <property type="status" value="ALT_SEQ"/>
    <property type="molecule type" value="Genomic_DNA"/>
</dbReference>
<dbReference type="EMBL" id="AC084110">
    <property type="protein sequence ID" value="AAG60176.1"/>
    <property type="status" value="ALT_SEQ"/>
    <property type="molecule type" value="Genomic_DNA"/>
</dbReference>
<dbReference type="EMBL" id="CP002684">
    <property type="protein sequence ID" value="AEE31464.1"/>
    <property type="molecule type" value="Genomic_DNA"/>
</dbReference>
<dbReference type="EMBL" id="AK118066">
    <property type="protein sequence ID" value="BAC42697.1"/>
    <property type="molecule type" value="mRNA"/>
</dbReference>
<dbReference type="PIR" id="H86447">
    <property type="entry name" value="H86447"/>
</dbReference>
<dbReference type="RefSeq" id="NP_001321152.1">
    <property type="nucleotide sequence ID" value="NM_001333004.1"/>
</dbReference>
<dbReference type="RefSeq" id="NP_174511.2">
    <property type="nucleotide sequence ID" value="NM_102966.4"/>
</dbReference>
<dbReference type="SMR" id="Q9LQM7"/>
<dbReference type="BioGRID" id="25359">
    <property type="interactions" value="6"/>
</dbReference>
<dbReference type="FunCoup" id="Q9LQM7">
    <property type="interactions" value="1765"/>
</dbReference>
<dbReference type="IntAct" id="Q9LQM7">
    <property type="interactions" value="6"/>
</dbReference>
<dbReference type="STRING" id="3702.Q9LQM7"/>
<dbReference type="GlyGen" id="Q9LQM7">
    <property type="glycosylation" value="1 site"/>
</dbReference>
<dbReference type="PaxDb" id="3702-AT1G32330.1"/>
<dbReference type="ProteomicsDB" id="230343"/>
<dbReference type="EnsemblPlants" id="AT1G32330.1">
    <property type="protein sequence ID" value="AT1G32330.1"/>
    <property type="gene ID" value="AT1G32330"/>
</dbReference>
<dbReference type="GeneID" id="840125"/>
<dbReference type="Gramene" id="AT1G32330.1">
    <property type="protein sequence ID" value="AT1G32330.1"/>
    <property type="gene ID" value="AT1G32330"/>
</dbReference>
<dbReference type="KEGG" id="ath:AT1G32330"/>
<dbReference type="Araport" id="AT1G32330"/>
<dbReference type="TAIR" id="AT1G32330">
    <property type="gene designation" value="HSFA1D"/>
</dbReference>
<dbReference type="eggNOG" id="KOG0627">
    <property type="taxonomic scope" value="Eukaryota"/>
</dbReference>
<dbReference type="HOGENOM" id="CLU_030308_0_6_1"/>
<dbReference type="InParanoid" id="Q9LQM7"/>
<dbReference type="PhylomeDB" id="Q9LQM7"/>
<dbReference type="PRO" id="PR:Q9LQM7"/>
<dbReference type="Proteomes" id="UP000006548">
    <property type="component" value="Chromosome 1"/>
</dbReference>
<dbReference type="ExpressionAtlas" id="Q9LQM7">
    <property type="expression patterns" value="baseline and differential"/>
</dbReference>
<dbReference type="GO" id="GO:0005737">
    <property type="term" value="C:cytoplasm"/>
    <property type="evidence" value="ECO:0007669"/>
    <property type="project" value="UniProtKB-SubCell"/>
</dbReference>
<dbReference type="GO" id="GO:0005634">
    <property type="term" value="C:nucleus"/>
    <property type="evidence" value="ECO:0007669"/>
    <property type="project" value="UniProtKB-SubCell"/>
</dbReference>
<dbReference type="GO" id="GO:0003700">
    <property type="term" value="F:DNA-binding transcription factor activity"/>
    <property type="evidence" value="ECO:0000250"/>
    <property type="project" value="TAIR"/>
</dbReference>
<dbReference type="GO" id="GO:0043565">
    <property type="term" value="F:sequence-specific DNA binding"/>
    <property type="evidence" value="ECO:0007669"/>
    <property type="project" value="InterPro"/>
</dbReference>
<dbReference type="GO" id="GO:0009408">
    <property type="term" value="P:response to heat"/>
    <property type="evidence" value="ECO:0000270"/>
    <property type="project" value="TAIR"/>
</dbReference>
<dbReference type="FunFam" id="1.10.10.10:FF:000057">
    <property type="entry name" value="Heat shock transcription factor 1"/>
    <property type="match status" value="1"/>
</dbReference>
<dbReference type="Gene3D" id="1.10.10.10">
    <property type="entry name" value="Winged helix-like DNA-binding domain superfamily/Winged helix DNA-binding domain"/>
    <property type="match status" value="1"/>
</dbReference>
<dbReference type="InterPro" id="IPR000232">
    <property type="entry name" value="HSF_DNA-bd"/>
</dbReference>
<dbReference type="InterPro" id="IPR036388">
    <property type="entry name" value="WH-like_DNA-bd_sf"/>
</dbReference>
<dbReference type="InterPro" id="IPR036390">
    <property type="entry name" value="WH_DNA-bd_sf"/>
</dbReference>
<dbReference type="PANTHER" id="PTHR10015">
    <property type="entry name" value="HEAT SHOCK TRANSCRIPTION FACTOR"/>
    <property type="match status" value="1"/>
</dbReference>
<dbReference type="PANTHER" id="PTHR10015:SF436">
    <property type="entry name" value="HEAT STRESS TRANSCRIPTION FACTOR A-1D"/>
    <property type="match status" value="1"/>
</dbReference>
<dbReference type="Pfam" id="PF00447">
    <property type="entry name" value="HSF_DNA-bind"/>
    <property type="match status" value="1"/>
</dbReference>
<dbReference type="PRINTS" id="PR00056">
    <property type="entry name" value="HSFDOMAIN"/>
</dbReference>
<dbReference type="SMART" id="SM00415">
    <property type="entry name" value="HSF"/>
    <property type="match status" value="1"/>
</dbReference>
<dbReference type="SUPFAM" id="SSF46785">
    <property type="entry name" value="Winged helix' DNA-binding domain"/>
    <property type="match status" value="1"/>
</dbReference>
<dbReference type="PROSITE" id="PS00434">
    <property type="entry name" value="HSF_DOMAIN"/>
    <property type="match status" value="1"/>
</dbReference>
<proteinExistence type="evidence at protein level"/>